<dbReference type="EC" id="3.5.3.1" evidence="1"/>
<dbReference type="EMBL" id="BX571856">
    <property type="protein sequence ID" value="CAG41234.1"/>
    <property type="molecule type" value="Genomic_DNA"/>
</dbReference>
<dbReference type="SMR" id="Q6GER3"/>
<dbReference type="KEGG" id="sar:SAR2255"/>
<dbReference type="HOGENOM" id="CLU_039478_6_2_9"/>
<dbReference type="UniPathway" id="UPA00158">
    <property type="reaction ID" value="UER00270"/>
</dbReference>
<dbReference type="Proteomes" id="UP000000596">
    <property type="component" value="Chromosome"/>
</dbReference>
<dbReference type="GO" id="GO:0005737">
    <property type="term" value="C:cytoplasm"/>
    <property type="evidence" value="ECO:0007669"/>
    <property type="project" value="TreeGrafter"/>
</dbReference>
<dbReference type="GO" id="GO:0004053">
    <property type="term" value="F:arginase activity"/>
    <property type="evidence" value="ECO:0007669"/>
    <property type="project" value="UniProtKB-EC"/>
</dbReference>
<dbReference type="GO" id="GO:0030145">
    <property type="term" value="F:manganese ion binding"/>
    <property type="evidence" value="ECO:0007669"/>
    <property type="project" value="TreeGrafter"/>
</dbReference>
<dbReference type="GO" id="GO:0019547">
    <property type="term" value="P:arginine catabolic process to ornithine"/>
    <property type="evidence" value="ECO:0007669"/>
    <property type="project" value="TreeGrafter"/>
</dbReference>
<dbReference type="GO" id="GO:0000050">
    <property type="term" value="P:urea cycle"/>
    <property type="evidence" value="ECO:0007669"/>
    <property type="project" value="UniProtKB-UniPathway"/>
</dbReference>
<dbReference type="CDD" id="cd09989">
    <property type="entry name" value="Arginase"/>
    <property type="match status" value="1"/>
</dbReference>
<dbReference type="FunFam" id="3.40.800.10:FF:000005">
    <property type="entry name" value="Arginase"/>
    <property type="match status" value="1"/>
</dbReference>
<dbReference type="Gene3D" id="3.40.800.10">
    <property type="entry name" value="Ureohydrolase domain"/>
    <property type="match status" value="1"/>
</dbReference>
<dbReference type="InterPro" id="IPR014033">
    <property type="entry name" value="Arginase"/>
</dbReference>
<dbReference type="InterPro" id="IPR006035">
    <property type="entry name" value="Ureohydrolase"/>
</dbReference>
<dbReference type="InterPro" id="IPR023696">
    <property type="entry name" value="Ureohydrolase_dom_sf"/>
</dbReference>
<dbReference type="InterPro" id="IPR020855">
    <property type="entry name" value="Ureohydrolase_Mn_BS"/>
</dbReference>
<dbReference type="NCBIfam" id="TIGR01229">
    <property type="entry name" value="rocF_arginase"/>
    <property type="match status" value="1"/>
</dbReference>
<dbReference type="PANTHER" id="PTHR43782">
    <property type="entry name" value="ARGINASE"/>
    <property type="match status" value="1"/>
</dbReference>
<dbReference type="PANTHER" id="PTHR43782:SF3">
    <property type="entry name" value="ARGINASE"/>
    <property type="match status" value="1"/>
</dbReference>
<dbReference type="Pfam" id="PF00491">
    <property type="entry name" value="Arginase"/>
    <property type="match status" value="1"/>
</dbReference>
<dbReference type="PIRSF" id="PIRSF036979">
    <property type="entry name" value="Arginase"/>
    <property type="match status" value="1"/>
</dbReference>
<dbReference type="PRINTS" id="PR00116">
    <property type="entry name" value="ARGINASE"/>
</dbReference>
<dbReference type="SUPFAM" id="SSF52768">
    <property type="entry name" value="Arginase/deacetylase"/>
    <property type="match status" value="1"/>
</dbReference>
<dbReference type="PROSITE" id="PS01053">
    <property type="entry name" value="ARGINASE_1"/>
    <property type="match status" value="1"/>
</dbReference>
<dbReference type="PROSITE" id="PS51409">
    <property type="entry name" value="ARGINASE_2"/>
    <property type="match status" value="1"/>
</dbReference>
<proteinExistence type="inferred from homology"/>
<name>ARGI_STAAR</name>
<keyword id="KW-0056">Arginine metabolism</keyword>
<keyword id="KW-0378">Hydrolase</keyword>
<keyword id="KW-0464">Manganese</keyword>
<keyword id="KW-0479">Metal-binding</keyword>
<protein>
    <recommendedName>
        <fullName>Arginase</fullName>
        <ecNumber evidence="1">3.5.3.1</ecNumber>
    </recommendedName>
</protein>
<gene>
    <name type="primary">arg</name>
    <name type="ordered locus">SAR2255</name>
</gene>
<sequence length="302" mass="33281">MTKKKGIDIIGVPSTFGQRKLGVDLGPTAIRYAGLIPRLKQLDLDVNDKGDIKVSAVDIEKFQSEQNGLRNYDEIIDVTQKLNKEVSASIENNRFPLVLGGDHSIAIGSVSAISKHYNNLGVIWYDAHGDLNIPEESPSGNIHGMPLRILTGEGPKELLELNSNVIKPENIVLIGMRDLDKGERQFIKDHNIKTFTMSDIDKLGIKEVIENTIEYLKSRNVDGVHLSLDVDALDPLETPGTGTRVLGGLTYRESHFALELLHQSQSVTSMDLVEVNPLIDHNNHTAEQSVSLVGTFFGETLL</sequence>
<feature type="chain" id="PRO_0000173722" description="Arginase">
    <location>
        <begin position="1"/>
        <end position="302"/>
    </location>
</feature>
<feature type="binding site" evidence="3">
    <location>
        <position position="103"/>
    </location>
    <ligand>
        <name>Mn(2+)</name>
        <dbReference type="ChEBI" id="CHEBI:29035"/>
        <label>1</label>
    </ligand>
</feature>
<feature type="binding site" evidence="3">
    <location>
        <position position="126"/>
    </location>
    <ligand>
        <name>Mn(2+)</name>
        <dbReference type="ChEBI" id="CHEBI:29035"/>
        <label>1</label>
    </ligand>
</feature>
<feature type="binding site" evidence="3">
    <location>
        <position position="126"/>
    </location>
    <ligand>
        <name>Mn(2+)</name>
        <dbReference type="ChEBI" id="CHEBI:29035"/>
        <label>2</label>
    </ligand>
</feature>
<feature type="binding site" evidence="2">
    <location>
        <begin position="128"/>
        <end position="132"/>
    </location>
    <ligand>
        <name>substrate</name>
    </ligand>
</feature>
<feature type="binding site" evidence="3">
    <location>
        <position position="128"/>
    </location>
    <ligand>
        <name>Mn(2+)</name>
        <dbReference type="ChEBI" id="CHEBI:29035"/>
        <label>2</label>
    </ligand>
</feature>
<feature type="binding site" evidence="3">
    <location>
        <position position="130"/>
    </location>
    <ligand>
        <name>Mn(2+)</name>
        <dbReference type="ChEBI" id="CHEBI:29035"/>
        <label>1</label>
    </ligand>
</feature>
<feature type="binding site" evidence="2">
    <location>
        <begin position="139"/>
        <end position="141"/>
    </location>
    <ligand>
        <name>substrate</name>
    </ligand>
</feature>
<feature type="binding site" evidence="2">
    <location>
        <position position="180"/>
    </location>
    <ligand>
        <name>substrate</name>
    </ligand>
</feature>
<feature type="binding site" evidence="3">
    <location>
        <position position="229"/>
    </location>
    <ligand>
        <name>Mn(2+)</name>
        <dbReference type="ChEBI" id="CHEBI:29035"/>
        <label>1</label>
    </ligand>
</feature>
<feature type="binding site" evidence="3">
    <location>
        <position position="229"/>
    </location>
    <ligand>
        <name>Mn(2+)</name>
        <dbReference type="ChEBI" id="CHEBI:29035"/>
        <label>2</label>
    </ligand>
</feature>
<feature type="binding site" evidence="3">
    <location>
        <position position="231"/>
    </location>
    <ligand>
        <name>Mn(2+)</name>
        <dbReference type="ChEBI" id="CHEBI:29035"/>
        <label>2</label>
    </ligand>
</feature>
<feature type="binding site" evidence="2">
    <location>
        <position position="243"/>
    </location>
    <ligand>
        <name>substrate</name>
    </ligand>
</feature>
<feature type="binding site" evidence="2">
    <location>
        <position position="274"/>
    </location>
    <ligand>
        <name>substrate</name>
    </ligand>
</feature>
<evidence type="ECO:0000250" key="1">
    <source>
        <dbReference type="UniProtKB" id="P05089"/>
    </source>
</evidence>
<evidence type="ECO:0000250" key="2">
    <source>
        <dbReference type="UniProtKB" id="P53608"/>
    </source>
</evidence>
<evidence type="ECO:0000255" key="3">
    <source>
        <dbReference type="PROSITE-ProRule" id="PRU00742"/>
    </source>
</evidence>
<reference key="1">
    <citation type="journal article" date="2004" name="Proc. Natl. Acad. Sci. U.S.A.">
        <title>Complete genomes of two clinical Staphylococcus aureus strains: evidence for the rapid evolution of virulence and drug resistance.</title>
        <authorList>
            <person name="Holden M.T.G."/>
            <person name="Feil E.J."/>
            <person name="Lindsay J.A."/>
            <person name="Peacock S.J."/>
            <person name="Day N.P.J."/>
            <person name="Enright M.C."/>
            <person name="Foster T.J."/>
            <person name="Moore C.E."/>
            <person name="Hurst L."/>
            <person name="Atkin R."/>
            <person name="Barron A."/>
            <person name="Bason N."/>
            <person name="Bentley S.D."/>
            <person name="Chillingworth C."/>
            <person name="Chillingworth T."/>
            <person name="Churcher C."/>
            <person name="Clark L."/>
            <person name="Corton C."/>
            <person name="Cronin A."/>
            <person name="Doggett J."/>
            <person name="Dowd L."/>
            <person name="Feltwell T."/>
            <person name="Hance Z."/>
            <person name="Harris B."/>
            <person name="Hauser H."/>
            <person name="Holroyd S."/>
            <person name="Jagels K."/>
            <person name="James K.D."/>
            <person name="Lennard N."/>
            <person name="Line A."/>
            <person name="Mayes R."/>
            <person name="Moule S."/>
            <person name="Mungall K."/>
            <person name="Ormond D."/>
            <person name="Quail M.A."/>
            <person name="Rabbinowitsch E."/>
            <person name="Rutherford K.M."/>
            <person name="Sanders M."/>
            <person name="Sharp S."/>
            <person name="Simmonds M."/>
            <person name="Stevens K."/>
            <person name="Whitehead S."/>
            <person name="Barrell B.G."/>
            <person name="Spratt B.G."/>
            <person name="Parkhill J."/>
        </authorList>
    </citation>
    <scope>NUCLEOTIDE SEQUENCE [LARGE SCALE GENOMIC DNA]</scope>
    <source>
        <strain>MRSA252</strain>
    </source>
</reference>
<accession>Q6GER3</accession>
<organism>
    <name type="scientific">Staphylococcus aureus (strain MRSA252)</name>
    <dbReference type="NCBI Taxonomy" id="282458"/>
    <lineage>
        <taxon>Bacteria</taxon>
        <taxon>Bacillati</taxon>
        <taxon>Bacillota</taxon>
        <taxon>Bacilli</taxon>
        <taxon>Bacillales</taxon>
        <taxon>Staphylococcaceae</taxon>
        <taxon>Staphylococcus</taxon>
    </lineage>
</organism>
<comment type="catalytic activity">
    <reaction evidence="1">
        <text>L-arginine + H2O = urea + L-ornithine</text>
        <dbReference type="Rhea" id="RHEA:20569"/>
        <dbReference type="ChEBI" id="CHEBI:15377"/>
        <dbReference type="ChEBI" id="CHEBI:16199"/>
        <dbReference type="ChEBI" id="CHEBI:32682"/>
        <dbReference type="ChEBI" id="CHEBI:46911"/>
        <dbReference type="EC" id="3.5.3.1"/>
    </reaction>
</comment>
<comment type="cofactor">
    <cofactor evidence="3">
        <name>Mn(2+)</name>
        <dbReference type="ChEBI" id="CHEBI:29035"/>
    </cofactor>
    <text evidence="3">Binds 2 manganese ions per subunit.</text>
</comment>
<comment type="pathway">
    <text evidence="1">Nitrogen metabolism; urea cycle; L-ornithine and urea from L-arginine: step 1/1.</text>
</comment>
<comment type="similarity">
    <text evidence="3">Belongs to the arginase family.</text>
</comment>